<organism>
    <name type="scientific">Tetraodon nigroviridis</name>
    <name type="common">Spotted green pufferfish</name>
    <name type="synonym">Chelonodon nigroviridis</name>
    <dbReference type="NCBI Taxonomy" id="99883"/>
    <lineage>
        <taxon>Eukaryota</taxon>
        <taxon>Metazoa</taxon>
        <taxon>Chordata</taxon>
        <taxon>Craniata</taxon>
        <taxon>Vertebrata</taxon>
        <taxon>Euteleostomi</taxon>
        <taxon>Actinopterygii</taxon>
        <taxon>Neopterygii</taxon>
        <taxon>Teleostei</taxon>
        <taxon>Neoteleostei</taxon>
        <taxon>Acanthomorphata</taxon>
        <taxon>Eupercaria</taxon>
        <taxon>Tetraodontiformes</taxon>
        <taxon>Tetradontoidea</taxon>
        <taxon>Tetraodontidae</taxon>
        <taxon>Tetraodon</taxon>
    </lineage>
</organism>
<proteinExistence type="inferred from homology"/>
<comment type="function">
    <text evidence="1">Subunit a, of the mitochondrial membrane ATP synthase complex (F(1)F(0) ATP synthase or Complex V) that produces ATP from ADP in the presence of a proton gradient across the membrane which is generated by electron transport complexes of the respiratory chain. ATP synthase complex consist of a soluble F(1) head domain - the catalytic core - and a membrane F(1) domain - the membrane proton channel. These two domains are linked by a central stalk rotating inside the F(1) region and a stationary peripheral stalk. During catalysis, ATP synthesis in the catalytic domain of F(1) is coupled via a rotary mechanism of the central stalk subunits to proton translocation. With the subunit c (ATP5MC1), forms the proton-conducting channel in the F(0) domain, that contains two crucial half-channels (inlet and outlet) that facilitate proton movement from the mitochondrial intermembrane space (IMS) into the matrix. Protons are taken up via the inlet half-channel and released through the outlet half-channel, following a Grotthuss mechanism.</text>
</comment>
<comment type="catalytic activity">
    <reaction evidence="1">
        <text>H(+)(in) = H(+)(out)</text>
        <dbReference type="Rhea" id="RHEA:34979"/>
        <dbReference type="ChEBI" id="CHEBI:15378"/>
    </reaction>
</comment>
<comment type="subunit">
    <text evidence="1">Component of the ATP synthase complex composed at least of ATP5F1A/subunit alpha, ATP5F1B/subunit beta, ATP5MC1/subunit c (homooctomer), MT-ATP6/subunit a, MT-ATP8/subunit 8, ATP5ME/subunit e, ATP5MF/subunit f, ATP5MG/subunit g, ATP5MK/subunit k, ATP5MJ/subunit j, ATP5F1C/subunit gamma, ATP5F1D/subunit delta, ATP5F1E/subunit epsilon, ATP5PF/subunit F6, ATP5PB/subunit b, ATP5PD/subunit d, ATP5PO/subunit OSCP. ATP synthase complex consists of a soluble F(1) head domain (subunits alpha(3) and beta(3)) - the catalytic core - and a membrane F(0) domain - the membrane proton channel (subunits c, a, 8, e, f, g, k and j). These two domains are linked by a central stalk (subunits gamma, delta, and epsilon) rotating inside the F1 region and a stationary peripheral stalk (subunits F6, b, d, and OSCP). Interacts with DNAJC30; interaction is direct.</text>
</comment>
<comment type="subcellular location">
    <subcellularLocation>
        <location>Mitochondrion inner membrane</location>
        <topology>Multi-pass membrane protein</topology>
    </subcellularLocation>
</comment>
<comment type="similarity">
    <text evidence="3">Belongs to the ATPase A chain family.</text>
</comment>
<protein>
    <recommendedName>
        <fullName evidence="1">ATP synthase F(0) complex subunit a</fullName>
    </recommendedName>
    <alternativeName>
        <fullName>F-ATPase protein 6</fullName>
    </alternativeName>
    <alternativeName>
        <fullName evidence="1">Proton-conducting channel, ATP synthase F(0) complex subunit a</fullName>
    </alternativeName>
</protein>
<sequence length="227" mass="25077">MTLSFFDQFLSPTLFGIPLIALALLLPWTLFPAPSSRWVNSRLLTLQSWFINRFTQQLLLPLNMGGHKWGPYILLVMVFLISINMLGLLPYTFTPTTQLSVNMALAVPVWLMTVIIGLRKNPTAALGHLLPEGTPVPLIPALILIETISLFIRPLALGVRLTANLTAGHLLIQLIATAAFVLLPLMPTVAILTTILLFLLTLLEVAVAMIQAYVFVLLLSLYLQENV</sequence>
<evidence type="ECO:0000250" key="1">
    <source>
        <dbReference type="UniProtKB" id="P00846"/>
    </source>
</evidence>
<evidence type="ECO:0000255" key="2"/>
<evidence type="ECO:0000305" key="3"/>
<name>ATP6_TETNG</name>
<dbReference type="EMBL" id="DQ019313">
    <property type="protein sequence ID" value="AAY26159.1"/>
    <property type="molecule type" value="Genomic_DNA"/>
</dbReference>
<dbReference type="SMR" id="Q4JQI2"/>
<dbReference type="FunCoup" id="Q4JQI2">
    <property type="interactions" value="17"/>
</dbReference>
<dbReference type="STRING" id="99883.ENSTNIP00000000835"/>
<dbReference type="Ensembl" id="ENSTNIT00000003214.1">
    <property type="protein sequence ID" value="ENSTNIP00000000835.1"/>
    <property type="gene ID" value="ENSTNIG00000000581.1"/>
</dbReference>
<dbReference type="GeneTree" id="ENSGT00390000005568"/>
<dbReference type="HOGENOM" id="CLU_041018_0_2_1"/>
<dbReference type="InParanoid" id="Q4JQI2"/>
<dbReference type="OMA" id="FFDQFMS"/>
<dbReference type="TreeFam" id="TF343395"/>
<dbReference type="Proteomes" id="UP000007303">
    <property type="component" value="Mitochondrion"/>
</dbReference>
<dbReference type="GO" id="GO:0005743">
    <property type="term" value="C:mitochondrial inner membrane"/>
    <property type="evidence" value="ECO:0007669"/>
    <property type="project" value="UniProtKB-SubCell"/>
</dbReference>
<dbReference type="GO" id="GO:0045259">
    <property type="term" value="C:proton-transporting ATP synthase complex"/>
    <property type="evidence" value="ECO:0000250"/>
    <property type="project" value="UniProtKB"/>
</dbReference>
<dbReference type="GO" id="GO:0015252">
    <property type="term" value="F:proton channel activity"/>
    <property type="evidence" value="ECO:0000250"/>
    <property type="project" value="UniProtKB"/>
</dbReference>
<dbReference type="GO" id="GO:0046933">
    <property type="term" value="F:proton-transporting ATP synthase activity, rotational mechanism"/>
    <property type="evidence" value="ECO:0007669"/>
    <property type="project" value="TreeGrafter"/>
</dbReference>
<dbReference type="GO" id="GO:0015986">
    <property type="term" value="P:proton motive force-driven ATP synthesis"/>
    <property type="evidence" value="ECO:0000250"/>
    <property type="project" value="UniProtKB"/>
</dbReference>
<dbReference type="GO" id="GO:1902600">
    <property type="term" value="P:proton transmembrane transport"/>
    <property type="evidence" value="ECO:0000250"/>
    <property type="project" value="UniProtKB"/>
</dbReference>
<dbReference type="CDD" id="cd00310">
    <property type="entry name" value="ATP-synt_Fo_a_6"/>
    <property type="match status" value="1"/>
</dbReference>
<dbReference type="FunFam" id="1.20.120.220:FF:000004">
    <property type="entry name" value="ATP synthase subunit a"/>
    <property type="match status" value="1"/>
</dbReference>
<dbReference type="Gene3D" id="1.20.120.220">
    <property type="entry name" value="ATP synthase, F0 complex, subunit A"/>
    <property type="match status" value="1"/>
</dbReference>
<dbReference type="InterPro" id="IPR000568">
    <property type="entry name" value="ATP_synth_F0_asu"/>
</dbReference>
<dbReference type="InterPro" id="IPR023011">
    <property type="entry name" value="ATP_synth_F0_asu_AS"/>
</dbReference>
<dbReference type="InterPro" id="IPR045083">
    <property type="entry name" value="ATP_synth_F0_asu_bact/mt"/>
</dbReference>
<dbReference type="InterPro" id="IPR035908">
    <property type="entry name" value="F0_ATP_A_sf"/>
</dbReference>
<dbReference type="NCBIfam" id="TIGR01131">
    <property type="entry name" value="ATP_synt_6_or_A"/>
    <property type="match status" value="1"/>
</dbReference>
<dbReference type="PANTHER" id="PTHR11410">
    <property type="entry name" value="ATP SYNTHASE SUBUNIT A"/>
    <property type="match status" value="1"/>
</dbReference>
<dbReference type="PANTHER" id="PTHR11410:SF0">
    <property type="entry name" value="ATP SYNTHASE SUBUNIT A"/>
    <property type="match status" value="1"/>
</dbReference>
<dbReference type="Pfam" id="PF00119">
    <property type="entry name" value="ATP-synt_A"/>
    <property type="match status" value="1"/>
</dbReference>
<dbReference type="PRINTS" id="PR00123">
    <property type="entry name" value="ATPASEA"/>
</dbReference>
<dbReference type="SUPFAM" id="SSF81336">
    <property type="entry name" value="F1F0 ATP synthase subunit A"/>
    <property type="match status" value="1"/>
</dbReference>
<dbReference type="PROSITE" id="PS00449">
    <property type="entry name" value="ATPASE_A"/>
    <property type="match status" value="1"/>
</dbReference>
<accession>Q4JQI2</accession>
<reference key="1">
    <citation type="journal article" date="2006" name="DNA Seq.">
        <title>The complete nucleotide sequence of the mitochondrial genome of Tetraodon nigroviridis.</title>
        <authorList>
            <person name="Yue G.H."/>
            <person name="Lo L.C."/>
            <person name="Zhu Z.Y."/>
            <person name="Lin G."/>
            <person name="Feng F."/>
        </authorList>
    </citation>
    <scope>NUCLEOTIDE SEQUENCE [LARGE SCALE GENOMIC DNA]</scope>
</reference>
<gene>
    <name evidence="1" type="primary">mt-atp6</name>
    <name type="synonym">atp6</name>
    <name type="synonym">atpase6</name>
    <name type="synonym">mtatp6</name>
</gene>
<feature type="chain" id="PRO_0000082176" description="ATP synthase F(0) complex subunit a">
    <location>
        <begin position="1"/>
        <end position="227"/>
    </location>
</feature>
<feature type="transmembrane region" description="Helical" evidence="2">
    <location>
        <begin position="14"/>
        <end position="34"/>
    </location>
</feature>
<feature type="transmembrane region" description="Helical" evidence="2">
    <location>
        <begin position="69"/>
        <end position="89"/>
    </location>
</feature>
<feature type="transmembrane region" description="Helical" evidence="2">
    <location>
        <begin position="98"/>
        <end position="118"/>
    </location>
</feature>
<feature type="transmembrane region" description="Helical" evidence="2">
    <location>
        <begin position="132"/>
        <end position="152"/>
    </location>
</feature>
<feature type="transmembrane region" description="Helical" evidence="2">
    <location>
        <begin position="180"/>
        <end position="200"/>
    </location>
</feature>
<feature type="transmembrane region" description="Helical" evidence="2">
    <location>
        <begin position="202"/>
        <end position="222"/>
    </location>
</feature>
<keyword id="KW-0066">ATP synthesis</keyword>
<keyword id="KW-0138">CF(0)</keyword>
<keyword id="KW-0375">Hydrogen ion transport</keyword>
<keyword id="KW-0406">Ion transport</keyword>
<keyword id="KW-0472">Membrane</keyword>
<keyword id="KW-0496">Mitochondrion</keyword>
<keyword id="KW-0999">Mitochondrion inner membrane</keyword>
<keyword id="KW-1185">Reference proteome</keyword>
<keyword id="KW-0812">Transmembrane</keyword>
<keyword id="KW-1133">Transmembrane helix</keyword>
<keyword id="KW-0813">Transport</keyword>
<geneLocation type="mitochondrion"/>